<reference key="1">
    <citation type="journal article" date="2009" name="Stand. Genomic Sci.">
        <title>Complete genome sequence of Acidimicrobium ferrooxidans type strain (ICP).</title>
        <authorList>
            <person name="Clum A."/>
            <person name="Nolan M."/>
            <person name="Lang E."/>
            <person name="Glavina Del Rio T."/>
            <person name="Tice H."/>
            <person name="Copeland A."/>
            <person name="Cheng J.F."/>
            <person name="Lucas S."/>
            <person name="Chen F."/>
            <person name="Bruce D."/>
            <person name="Goodwin L."/>
            <person name="Pitluck S."/>
            <person name="Ivanova N."/>
            <person name="Mavrommatis K."/>
            <person name="Mikhailova N."/>
            <person name="Pati A."/>
            <person name="Chen A."/>
            <person name="Palaniappan K."/>
            <person name="Goker M."/>
            <person name="Spring S."/>
            <person name="Land M."/>
            <person name="Hauser L."/>
            <person name="Chang Y.J."/>
            <person name="Jeffries C.C."/>
            <person name="Chain P."/>
            <person name="Bristow J."/>
            <person name="Eisen J.A."/>
            <person name="Markowitz V."/>
            <person name="Hugenholtz P."/>
            <person name="Kyrpides N.C."/>
            <person name="Klenk H.P."/>
            <person name="Lapidus A."/>
        </authorList>
    </citation>
    <scope>NUCLEOTIDE SEQUENCE [LARGE SCALE GENOMIC DNA]</scope>
    <source>
        <strain>DSM 10331 / JCM 15462 / NBRC 103882 / ICP</strain>
    </source>
</reference>
<gene>
    <name evidence="1" type="primary">mshD</name>
    <name type="ordered locus">Afer_1462</name>
</gene>
<feature type="chain" id="PRO_0000400234" description="Mycothiol acetyltransferase">
    <location>
        <begin position="1"/>
        <end position="310"/>
    </location>
</feature>
<feature type="domain" description="N-acetyltransferase 1" evidence="1">
    <location>
        <begin position="5"/>
        <end position="155"/>
    </location>
</feature>
<feature type="domain" description="N-acetyltransferase 2" evidence="1">
    <location>
        <begin position="160"/>
        <end position="309"/>
    </location>
</feature>
<feature type="binding site" evidence="1">
    <location>
        <begin position="80"/>
        <end position="82"/>
    </location>
    <ligand>
        <name>acetyl-CoA</name>
        <dbReference type="ChEBI" id="CHEBI:57288"/>
        <label>1</label>
    </ligand>
</feature>
<feature type="binding site" evidence="1">
    <location>
        <position position="187"/>
    </location>
    <ligand>
        <name>1D-myo-inositol 2-(L-cysteinylamino)-2-deoxy-alpha-D-glucopyranoside</name>
        <dbReference type="ChEBI" id="CHEBI:58887"/>
    </ligand>
</feature>
<feature type="binding site" evidence="1">
    <location>
        <position position="226"/>
    </location>
    <ligand>
        <name>1D-myo-inositol 2-(L-cysteinylamino)-2-deoxy-alpha-D-glucopyranoside</name>
        <dbReference type="ChEBI" id="CHEBI:58887"/>
    </ligand>
</feature>
<feature type="binding site" evidence="1">
    <location>
        <position position="238"/>
    </location>
    <ligand>
        <name>1D-myo-inositol 2-(L-cysteinylamino)-2-deoxy-alpha-D-glucopyranoside</name>
        <dbReference type="ChEBI" id="CHEBI:58887"/>
    </ligand>
</feature>
<feature type="binding site" evidence="1">
    <location>
        <begin position="242"/>
        <end position="244"/>
    </location>
    <ligand>
        <name>acetyl-CoA</name>
        <dbReference type="ChEBI" id="CHEBI:57288"/>
        <label>2</label>
    </ligand>
</feature>
<feature type="binding site" evidence="1">
    <location>
        <position position="276"/>
    </location>
    <ligand>
        <name>1D-myo-inositol 2-(L-cysteinylamino)-2-deoxy-alpha-D-glucopyranoside</name>
        <dbReference type="ChEBI" id="CHEBI:58887"/>
    </ligand>
</feature>
<feature type="binding site" evidence="1">
    <location>
        <begin position="281"/>
        <end position="286"/>
    </location>
    <ligand>
        <name>acetyl-CoA</name>
        <dbReference type="ChEBI" id="CHEBI:57288"/>
        <label>2</label>
    </ligand>
</feature>
<sequence>MHALTTVENPSARLLPGVLALIRDVEAADGHEVLEAHRWIDLANADAESLHGIAVTLDDDTVVGYVHLRRHHRHGIELELLVAPDHRDEAASIVGALVEAASASLETLGPHEIFAWVPRHSRQVIDALEGLGFRADRAVRQLRRPLPLESDHPARPIDCPPFRTFRPGEDEDAWLEVNNRAFAWHPDQGDWDLETLLARERESWFDPAGFLLAEQDGRLVGFCWTKVHAPRSSSALGEIYVIATDPERAPRGLGSCLLVAGLDYLAHHDIPTASLYVEDTNERALRLYDRFGFVVDHEDVRLVWRLPAAS</sequence>
<proteinExistence type="inferred from homology"/>
<evidence type="ECO:0000255" key="1">
    <source>
        <dbReference type="HAMAP-Rule" id="MF_01698"/>
    </source>
</evidence>
<keyword id="KW-0012">Acyltransferase</keyword>
<keyword id="KW-1185">Reference proteome</keyword>
<keyword id="KW-0677">Repeat</keyword>
<keyword id="KW-0808">Transferase</keyword>
<accession>C7M077</accession>
<dbReference type="EC" id="2.3.1.189" evidence="1"/>
<dbReference type="EMBL" id="CP001631">
    <property type="protein sequence ID" value="ACU54385.1"/>
    <property type="molecule type" value="Genomic_DNA"/>
</dbReference>
<dbReference type="RefSeq" id="WP_015798868.1">
    <property type="nucleotide sequence ID" value="NC_013124.1"/>
</dbReference>
<dbReference type="SMR" id="C7M077"/>
<dbReference type="STRING" id="525909.Afer_1462"/>
<dbReference type="KEGG" id="afo:Afer_1462"/>
<dbReference type="eggNOG" id="COG0456">
    <property type="taxonomic scope" value="Bacteria"/>
</dbReference>
<dbReference type="HOGENOM" id="CLU_068014_0_0_11"/>
<dbReference type="OrthoDB" id="3208058at2"/>
<dbReference type="Proteomes" id="UP000000771">
    <property type="component" value="Chromosome"/>
</dbReference>
<dbReference type="GO" id="GO:0035447">
    <property type="term" value="F:mycothiol synthase activity"/>
    <property type="evidence" value="ECO:0007669"/>
    <property type="project" value="UniProtKB-UniRule"/>
</dbReference>
<dbReference type="GO" id="GO:0008999">
    <property type="term" value="F:protein-N-terminal-alanine acetyltransferase activity"/>
    <property type="evidence" value="ECO:0007669"/>
    <property type="project" value="TreeGrafter"/>
</dbReference>
<dbReference type="GO" id="GO:0010125">
    <property type="term" value="P:mycothiol biosynthetic process"/>
    <property type="evidence" value="ECO:0007669"/>
    <property type="project" value="UniProtKB-UniRule"/>
</dbReference>
<dbReference type="CDD" id="cd04301">
    <property type="entry name" value="NAT_SF"/>
    <property type="match status" value="1"/>
</dbReference>
<dbReference type="Gene3D" id="3.40.630.30">
    <property type="match status" value="1"/>
</dbReference>
<dbReference type="HAMAP" id="MF_01698">
    <property type="entry name" value="MshD"/>
    <property type="match status" value="1"/>
</dbReference>
<dbReference type="InterPro" id="IPR016181">
    <property type="entry name" value="Acyl_CoA_acyltransferase"/>
</dbReference>
<dbReference type="InterPro" id="IPR000182">
    <property type="entry name" value="GNAT_dom"/>
</dbReference>
<dbReference type="InterPro" id="IPR050276">
    <property type="entry name" value="MshD_Acetyltransferase"/>
</dbReference>
<dbReference type="InterPro" id="IPR017813">
    <property type="entry name" value="Mycothiol_AcTrfase"/>
</dbReference>
<dbReference type="NCBIfam" id="TIGR03448">
    <property type="entry name" value="mycothiol_MshD"/>
    <property type="match status" value="1"/>
</dbReference>
<dbReference type="PANTHER" id="PTHR43617">
    <property type="entry name" value="L-AMINO ACID N-ACETYLTRANSFERASE"/>
    <property type="match status" value="1"/>
</dbReference>
<dbReference type="PANTHER" id="PTHR43617:SF31">
    <property type="entry name" value="MYCOTHIOL ACETYLTRANSFERASE"/>
    <property type="match status" value="1"/>
</dbReference>
<dbReference type="Pfam" id="PF00583">
    <property type="entry name" value="Acetyltransf_1"/>
    <property type="match status" value="1"/>
</dbReference>
<dbReference type="SUPFAM" id="SSF55729">
    <property type="entry name" value="Acyl-CoA N-acyltransferases (Nat)"/>
    <property type="match status" value="1"/>
</dbReference>
<dbReference type="PROSITE" id="PS51186">
    <property type="entry name" value="GNAT"/>
    <property type="match status" value="2"/>
</dbReference>
<name>MSHD_ACIFD</name>
<comment type="function">
    <text evidence="1">Catalyzes the transfer of acetyl from acetyl-CoA to desacetylmycothiol (Cys-GlcN-Ins) to form mycothiol.</text>
</comment>
<comment type="catalytic activity">
    <reaction evidence="1">
        <text>1D-myo-inositol 2-(L-cysteinylamino)-2-deoxy-alpha-D-glucopyranoside + acetyl-CoA = mycothiol + CoA + H(+)</text>
        <dbReference type="Rhea" id="RHEA:26172"/>
        <dbReference type="ChEBI" id="CHEBI:15378"/>
        <dbReference type="ChEBI" id="CHEBI:16768"/>
        <dbReference type="ChEBI" id="CHEBI:57287"/>
        <dbReference type="ChEBI" id="CHEBI:57288"/>
        <dbReference type="ChEBI" id="CHEBI:58887"/>
        <dbReference type="EC" id="2.3.1.189"/>
    </reaction>
</comment>
<comment type="subunit">
    <text evidence="1">Monomer.</text>
</comment>
<comment type="similarity">
    <text evidence="1">Belongs to the acetyltransferase family. MshD subfamily.</text>
</comment>
<organism>
    <name type="scientific">Acidimicrobium ferrooxidans (strain DSM 10331 / JCM 15462 / NBRC 103882 / ICP)</name>
    <dbReference type="NCBI Taxonomy" id="525909"/>
    <lineage>
        <taxon>Bacteria</taxon>
        <taxon>Bacillati</taxon>
        <taxon>Actinomycetota</taxon>
        <taxon>Acidimicrobiia</taxon>
        <taxon>Acidimicrobiales</taxon>
        <taxon>Acidimicrobiaceae</taxon>
        <taxon>Acidimicrobium</taxon>
    </lineage>
</organism>
<protein>
    <recommendedName>
        <fullName evidence="1">Mycothiol acetyltransferase</fullName>
        <shortName evidence="1">MSH acetyltransferase</shortName>
        <ecNumber evidence="1">2.3.1.189</ecNumber>
    </recommendedName>
    <alternativeName>
        <fullName evidence="1">Mycothiol synthase</fullName>
    </alternativeName>
</protein>